<keyword id="KW-1003">Cell membrane</keyword>
<keyword id="KW-0350">Heme biosynthesis</keyword>
<keyword id="KW-0472">Membrane</keyword>
<keyword id="KW-0808">Transferase</keyword>
<keyword id="KW-0812">Transmembrane</keyword>
<keyword id="KW-1133">Transmembrane helix</keyword>
<gene>
    <name evidence="1" type="primary">ctaB</name>
    <name type="ordered locus">SAUSA300_1016</name>
</gene>
<dbReference type="EC" id="2.5.1.141" evidence="1"/>
<dbReference type="EMBL" id="CP000255">
    <property type="protein sequence ID" value="ABD22261.1"/>
    <property type="molecule type" value="Genomic_DNA"/>
</dbReference>
<dbReference type="SMR" id="Q2FHW4"/>
<dbReference type="KEGG" id="saa:SAUSA300_1016"/>
<dbReference type="HOGENOM" id="CLU_029631_0_0_9"/>
<dbReference type="OMA" id="HFWAIGW"/>
<dbReference type="UniPathway" id="UPA00834">
    <property type="reaction ID" value="UER00712"/>
</dbReference>
<dbReference type="Proteomes" id="UP000001939">
    <property type="component" value="Chromosome"/>
</dbReference>
<dbReference type="GO" id="GO:0005886">
    <property type="term" value="C:plasma membrane"/>
    <property type="evidence" value="ECO:0007669"/>
    <property type="project" value="UniProtKB-SubCell"/>
</dbReference>
<dbReference type="GO" id="GO:0008495">
    <property type="term" value="F:protoheme IX farnesyltransferase activity"/>
    <property type="evidence" value="ECO:0007669"/>
    <property type="project" value="UniProtKB-UniRule"/>
</dbReference>
<dbReference type="GO" id="GO:0048034">
    <property type="term" value="P:heme O biosynthetic process"/>
    <property type="evidence" value="ECO:0007669"/>
    <property type="project" value="UniProtKB-UniRule"/>
</dbReference>
<dbReference type="CDD" id="cd13957">
    <property type="entry name" value="PT_UbiA_Cox10"/>
    <property type="match status" value="1"/>
</dbReference>
<dbReference type="Gene3D" id="1.10.357.140">
    <property type="entry name" value="UbiA prenyltransferase"/>
    <property type="match status" value="1"/>
</dbReference>
<dbReference type="HAMAP" id="MF_00154">
    <property type="entry name" value="CyoE_CtaB"/>
    <property type="match status" value="1"/>
</dbReference>
<dbReference type="InterPro" id="IPR006369">
    <property type="entry name" value="Protohaem_IX_farnesylTrfase"/>
</dbReference>
<dbReference type="InterPro" id="IPR000537">
    <property type="entry name" value="UbiA_prenyltransferase"/>
</dbReference>
<dbReference type="InterPro" id="IPR044878">
    <property type="entry name" value="UbiA_sf"/>
</dbReference>
<dbReference type="NCBIfam" id="TIGR01473">
    <property type="entry name" value="cyoE_ctaB"/>
    <property type="match status" value="1"/>
</dbReference>
<dbReference type="PANTHER" id="PTHR43448">
    <property type="entry name" value="PROTOHEME IX FARNESYLTRANSFERASE, MITOCHONDRIAL"/>
    <property type="match status" value="1"/>
</dbReference>
<dbReference type="PANTHER" id="PTHR43448:SF2">
    <property type="entry name" value="PROTOHEME IX FARNESYLTRANSFERASE, MITOCHONDRIAL"/>
    <property type="match status" value="1"/>
</dbReference>
<dbReference type="Pfam" id="PF01040">
    <property type="entry name" value="UbiA"/>
    <property type="match status" value="1"/>
</dbReference>
<reference key="1">
    <citation type="journal article" date="2006" name="Lancet">
        <title>Complete genome sequence of USA300, an epidemic clone of community-acquired meticillin-resistant Staphylococcus aureus.</title>
        <authorList>
            <person name="Diep B.A."/>
            <person name="Gill S.R."/>
            <person name="Chang R.F."/>
            <person name="Phan T.H."/>
            <person name="Chen J.H."/>
            <person name="Davidson M.G."/>
            <person name="Lin F."/>
            <person name="Lin J."/>
            <person name="Carleton H.A."/>
            <person name="Mongodin E.F."/>
            <person name="Sensabaugh G.F."/>
            <person name="Perdreau-Remington F."/>
        </authorList>
    </citation>
    <scope>NUCLEOTIDE SEQUENCE [LARGE SCALE GENOMIC DNA]</scope>
    <source>
        <strain>USA300</strain>
    </source>
</reference>
<evidence type="ECO:0000255" key="1">
    <source>
        <dbReference type="HAMAP-Rule" id="MF_00154"/>
    </source>
</evidence>
<protein>
    <recommendedName>
        <fullName evidence="1">Protoheme IX farnesyltransferase</fullName>
        <ecNumber evidence="1">2.5.1.141</ecNumber>
    </recommendedName>
    <alternativeName>
        <fullName evidence="1">Heme B farnesyltransferase</fullName>
    </alternativeName>
    <alternativeName>
        <fullName evidence="1">Heme O synthase</fullName>
    </alternativeName>
</protein>
<sequence length="303" mass="33859">MSKEHTLSQNISRVNFKELQQIIKMGLVQGNLIPAFAGAWLAVVMTNHSFLSSIPQILLMLFGSTLIMGGACALNNYYDQDIDRIMPSKQNRPTVNNRITDQNLLLLSFGMMLVGEICLFLLNIPSGVLGLMGIVGYVSYYSIWSKRHTTWNTVIGSFPGAVPPLIGWVAIEGQISLTAIALFLVVFCWQPIHFYALAIKRKDEYALANIPMLPSVKGFKRTRVSMFIWLIILLPVPLLLINLGVVFVVLATLLNLGWIALGLTTFKKNSDQTKWATQMFIYSLNYLVIFFVLAVIVSLLTLI</sequence>
<comment type="function">
    <text evidence="1">Converts heme B (protoheme IX) to heme O by substitution of the vinyl group on carbon 2 of heme B porphyrin ring with a hydroxyethyl farnesyl side group.</text>
</comment>
<comment type="catalytic activity">
    <reaction evidence="1">
        <text>heme b + (2E,6E)-farnesyl diphosphate + H2O = Fe(II)-heme o + diphosphate</text>
        <dbReference type="Rhea" id="RHEA:28070"/>
        <dbReference type="ChEBI" id="CHEBI:15377"/>
        <dbReference type="ChEBI" id="CHEBI:33019"/>
        <dbReference type="ChEBI" id="CHEBI:60344"/>
        <dbReference type="ChEBI" id="CHEBI:60530"/>
        <dbReference type="ChEBI" id="CHEBI:175763"/>
        <dbReference type="EC" id="2.5.1.141"/>
    </reaction>
</comment>
<comment type="pathway">
    <text evidence="1">Porphyrin-containing compound metabolism; heme O biosynthesis; heme O from protoheme: step 1/1.</text>
</comment>
<comment type="subunit">
    <text evidence="1">Interacts with CtaA.</text>
</comment>
<comment type="subcellular location">
    <subcellularLocation>
        <location evidence="1">Cell membrane</location>
        <topology evidence="1">Multi-pass membrane protein</topology>
    </subcellularLocation>
</comment>
<comment type="miscellaneous">
    <text evidence="1">Carbon 2 of the heme B porphyrin ring is defined according to the Fischer nomenclature.</text>
</comment>
<comment type="similarity">
    <text evidence="1">Belongs to the UbiA prenyltransferase family. Protoheme IX farnesyltransferase subfamily.</text>
</comment>
<name>COXX_STAA3</name>
<accession>Q2FHW4</accession>
<proteinExistence type="inferred from homology"/>
<feature type="chain" id="PRO_0000327163" description="Protoheme IX farnesyltransferase">
    <location>
        <begin position="1"/>
        <end position="303"/>
    </location>
</feature>
<feature type="transmembrane region" description="Helical" evidence="1">
    <location>
        <begin position="25"/>
        <end position="45"/>
    </location>
</feature>
<feature type="transmembrane region" description="Helical" evidence="1">
    <location>
        <begin position="54"/>
        <end position="74"/>
    </location>
</feature>
<feature type="transmembrane region" description="Helical" evidence="1">
    <location>
        <begin position="104"/>
        <end position="124"/>
    </location>
</feature>
<feature type="transmembrane region" description="Helical" evidence="1">
    <location>
        <begin position="125"/>
        <end position="145"/>
    </location>
</feature>
<feature type="transmembrane region" description="Helical" evidence="1">
    <location>
        <begin position="151"/>
        <end position="171"/>
    </location>
</feature>
<feature type="transmembrane region" description="Helical" evidence="1">
    <location>
        <begin position="179"/>
        <end position="199"/>
    </location>
</feature>
<feature type="transmembrane region" description="Helical" evidence="1">
    <location>
        <begin position="227"/>
        <end position="247"/>
    </location>
</feature>
<feature type="transmembrane region" description="Helical" evidence="1">
    <location>
        <begin position="248"/>
        <end position="268"/>
    </location>
</feature>
<feature type="transmembrane region" description="Helical" evidence="1">
    <location>
        <begin position="280"/>
        <end position="300"/>
    </location>
</feature>
<organism>
    <name type="scientific">Staphylococcus aureus (strain USA300)</name>
    <dbReference type="NCBI Taxonomy" id="367830"/>
    <lineage>
        <taxon>Bacteria</taxon>
        <taxon>Bacillati</taxon>
        <taxon>Bacillota</taxon>
        <taxon>Bacilli</taxon>
        <taxon>Bacillales</taxon>
        <taxon>Staphylococcaceae</taxon>
        <taxon>Staphylococcus</taxon>
    </lineage>
</organism>